<dbReference type="EMBL" id="AF006083">
    <property type="protein sequence ID" value="AAB64188.1"/>
    <property type="molecule type" value="mRNA"/>
</dbReference>
<dbReference type="EMBL" id="AF127773">
    <property type="protein sequence ID" value="AAD51904.1"/>
    <property type="molecule type" value="mRNA"/>
</dbReference>
<dbReference type="EMBL" id="AK312659">
    <property type="protein sequence ID" value="BAG35542.1"/>
    <property type="molecule type" value="mRNA"/>
</dbReference>
<dbReference type="EMBL" id="AC110769">
    <property type="protein sequence ID" value="AAX93226.1"/>
    <property type="molecule type" value="Genomic_DNA"/>
</dbReference>
<dbReference type="EMBL" id="CH471103">
    <property type="protein sequence ID" value="EAW95179.1"/>
    <property type="molecule type" value="Genomic_DNA"/>
</dbReference>
<dbReference type="EMBL" id="BC044590">
    <property type="protein sequence ID" value="AAH44590.1"/>
    <property type="molecule type" value="mRNA"/>
</dbReference>
<dbReference type="CCDS" id="CCDS33277.1"/>
<dbReference type="RefSeq" id="NP_005712.1">
    <property type="nucleotide sequence ID" value="NM_005721.5"/>
</dbReference>
<dbReference type="PDB" id="6UHC">
    <property type="method" value="EM"/>
    <property type="resolution" value="3.90 A"/>
    <property type="chains" value="A=1-418"/>
</dbReference>
<dbReference type="PDB" id="6YW6">
    <property type="method" value="EM"/>
    <property type="resolution" value="4.20 A"/>
    <property type="chains" value="A=1-418"/>
</dbReference>
<dbReference type="PDB" id="6YW7">
    <property type="method" value="EM"/>
    <property type="resolution" value="4.50 A"/>
    <property type="chains" value="A=1-418"/>
</dbReference>
<dbReference type="PDB" id="8P94">
    <property type="method" value="EM"/>
    <property type="resolution" value="3.30 A"/>
    <property type="chains" value="A=1-418"/>
</dbReference>
<dbReference type="PDBsum" id="6UHC"/>
<dbReference type="PDBsum" id="6YW6"/>
<dbReference type="PDBsum" id="6YW7"/>
<dbReference type="PDBsum" id="8P94"/>
<dbReference type="EMDB" id="EMD-10959"/>
<dbReference type="EMDB" id="EMD-10960"/>
<dbReference type="EMDB" id="EMD-17558"/>
<dbReference type="EMDB" id="EMD-20770"/>
<dbReference type="SMR" id="P61158"/>
<dbReference type="BioGRID" id="115403">
    <property type="interactions" value="322"/>
</dbReference>
<dbReference type="ComplexPortal" id="CPX-2579">
    <property type="entry name" value="Actin-related protein 2/3 complex, ARPC1B-ACTR3-ARPC5 variant"/>
</dbReference>
<dbReference type="ComplexPortal" id="CPX-2586">
    <property type="entry name" value="Actin-related protein 2/3 complex, ARPC1A-ACTR3-ARPC5 variant"/>
</dbReference>
<dbReference type="ComplexPortal" id="CPX-2592">
    <property type="entry name" value="Actin-related protein 2/3 complex, ARPC1A-ACTR3-ARPC5L variant"/>
</dbReference>
<dbReference type="ComplexPortal" id="CPX-2663">
    <property type="entry name" value="Actin-related protein 2/3 complex, ARPC1B-ACTR3-ARPC5L variant"/>
</dbReference>
<dbReference type="CORUM" id="P61158"/>
<dbReference type="DIP" id="DIP-33140N"/>
<dbReference type="FunCoup" id="P61158">
    <property type="interactions" value="3315"/>
</dbReference>
<dbReference type="IntAct" id="P61158">
    <property type="interactions" value="113"/>
</dbReference>
<dbReference type="MINT" id="P61158"/>
<dbReference type="STRING" id="9606.ENSP00000263238"/>
<dbReference type="ChEMBL" id="CHEMBL4105857"/>
<dbReference type="DrugBank" id="DB08236">
    <property type="generic name" value="(2S)-2-(3-bromophenyl)-3-(5-chloro-2-hydroxyphenyl)-1,3-thiazolidin-4-one"/>
</dbReference>
<dbReference type="DrugBank" id="DB08235">
    <property type="generic name" value="N-[2-(2-methyl-1H-indol-3-yl)ethyl]thiophene-2-carboxamide"/>
</dbReference>
<dbReference type="DrugCentral" id="P61158"/>
<dbReference type="GlyGen" id="P61158">
    <property type="glycosylation" value="1 site, 1 O-linked glycan (1 site)"/>
</dbReference>
<dbReference type="iPTMnet" id="P61158"/>
<dbReference type="MetOSite" id="P61158"/>
<dbReference type="PhosphoSitePlus" id="P61158"/>
<dbReference type="SwissPalm" id="P61158"/>
<dbReference type="BioMuta" id="ACTR3"/>
<dbReference type="DMDM" id="47117647"/>
<dbReference type="OGP" id="P32391"/>
<dbReference type="CPTAC" id="CPTAC-160"/>
<dbReference type="CPTAC" id="CPTAC-161"/>
<dbReference type="jPOST" id="P61158"/>
<dbReference type="MassIVE" id="P61158"/>
<dbReference type="PaxDb" id="9606-ENSP00000263238"/>
<dbReference type="PeptideAtlas" id="P61158"/>
<dbReference type="PRIDE" id="P61158"/>
<dbReference type="ProteomicsDB" id="57268"/>
<dbReference type="Pumba" id="P61158"/>
<dbReference type="Antibodypedia" id="3913">
    <property type="antibodies" value="346 antibodies from 37 providers"/>
</dbReference>
<dbReference type="DNASU" id="10096"/>
<dbReference type="Ensembl" id="ENST00000263238.7">
    <property type="protein sequence ID" value="ENSP00000263238.2"/>
    <property type="gene ID" value="ENSG00000115091.12"/>
</dbReference>
<dbReference type="GeneID" id="10096"/>
<dbReference type="KEGG" id="hsa:10096"/>
<dbReference type="MANE-Select" id="ENST00000263238.7">
    <property type="protein sequence ID" value="ENSP00000263238.2"/>
    <property type="RefSeq nucleotide sequence ID" value="NM_005721.5"/>
    <property type="RefSeq protein sequence ID" value="NP_005712.1"/>
</dbReference>
<dbReference type="UCSC" id="uc002tkx.3">
    <property type="organism name" value="human"/>
</dbReference>
<dbReference type="AGR" id="HGNC:170"/>
<dbReference type="CTD" id="10096"/>
<dbReference type="DisGeNET" id="10096"/>
<dbReference type="GeneCards" id="ACTR3"/>
<dbReference type="HGNC" id="HGNC:170">
    <property type="gene designation" value="ACTR3"/>
</dbReference>
<dbReference type="HPA" id="ENSG00000115091">
    <property type="expression patterns" value="Low tissue specificity"/>
</dbReference>
<dbReference type="MIM" id="604222">
    <property type="type" value="gene"/>
</dbReference>
<dbReference type="neXtProt" id="NX_P61158"/>
<dbReference type="OpenTargets" id="ENSG00000115091"/>
<dbReference type="PharmGKB" id="PA24489"/>
<dbReference type="VEuPathDB" id="HostDB:ENSG00000115091"/>
<dbReference type="eggNOG" id="KOG0678">
    <property type="taxonomic scope" value="Eukaryota"/>
</dbReference>
<dbReference type="GeneTree" id="ENSGT00940000155065"/>
<dbReference type="InParanoid" id="P61158"/>
<dbReference type="OMA" id="GIHYPIR"/>
<dbReference type="OrthoDB" id="421448at2759"/>
<dbReference type="PAN-GO" id="P61158">
    <property type="GO annotations" value="4 GO annotations based on evolutionary models"/>
</dbReference>
<dbReference type="PhylomeDB" id="P61158"/>
<dbReference type="TreeFam" id="TF300644"/>
<dbReference type="PathwayCommons" id="P61158"/>
<dbReference type="Reactome" id="R-HSA-2029482">
    <property type="pathway name" value="Regulation of actin dynamics for phagocytic cup formation"/>
</dbReference>
<dbReference type="Reactome" id="R-HSA-3928662">
    <property type="pathway name" value="EPHB-mediated forward signaling"/>
</dbReference>
<dbReference type="Reactome" id="R-HSA-5663213">
    <property type="pathway name" value="RHO GTPases Activate WASPs and WAVEs"/>
</dbReference>
<dbReference type="Reactome" id="R-HSA-8856828">
    <property type="pathway name" value="Clathrin-mediated endocytosis"/>
</dbReference>
<dbReference type="Reactome" id="R-HSA-9664422">
    <property type="pathway name" value="FCGR3A-mediated phagocytosis"/>
</dbReference>
<dbReference type="SignaLink" id="P61158"/>
<dbReference type="SIGNOR" id="P61158"/>
<dbReference type="BioGRID-ORCS" id="10096">
    <property type="hits" value="411 hits in 1189 CRISPR screens"/>
</dbReference>
<dbReference type="CD-CODE" id="91857CE7">
    <property type="entry name" value="Nucleolus"/>
</dbReference>
<dbReference type="CD-CODE" id="FB4E32DD">
    <property type="entry name" value="Presynaptic clusters and postsynaptic densities"/>
</dbReference>
<dbReference type="ChiTaRS" id="ACTR3">
    <property type="organism name" value="human"/>
</dbReference>
<dbReference type="GeneWiki" id="ACTR3"/>
<dbReference type="GenomeRNAi" id="10096"/>
<dbReference type="Pharos" id="P61158">
    <property type="development level" value="Tchem"/>
</dbReference>
<dbReference type="PRO" id="PR:P61158"/>
<dbReference type="Proteomes" id="UP000005640">
    <property type="component" value="Chromosome 2"/>
</dbReference>
<dbReference type="RNAct" id="P61158">
    <property type="molecule type" value="protein"/>
</dbReference>
<dbReference type="Bgee" id="ENSG00000115091">
    <property type="expression patterns" value="Expressed in esophagus squamous epithelium and 207 other cell types or tissues"/>
</dbReference>
<dbReference type="ExpressionAtlas" id="P61158">
    <property type="expression patterns" value="baseline and differential"/>
</dbReference>
<dbReference type="GO" id="GO:0015629">
    <property type="term" value="C:actin cytoskeleton"/>
    <property type="evidence" value="ECO:0000304"/>
    <property type="project" value="UniProtKB"/>
</dbReference>
<dbReference type="GO" id="GO:0005885">
    <property type="term" value="C:Arp2/3 protein complex"/>
    <property type="evidence" value="ECO:0000314"/>
    <property type="project" value="UniProtKB"/>
</dbReference>
<dbReference type="GO" id="GO:0005903">
    <property type="term" value="C:brush border"/>
    <property type="evidence" value="ECO:0007669"/>
    <property type="project" value="Ensembl"/>
</dbReference>
<dbReference type="GO" id="GO:0005911">
    <property type="term" value="C:cell-cell junction"/>
    <property type="evidence" value="ECO:0007669"/>
    <property type="project" value="Ensembl"/>
</dbReference>
<dbReference type="GO" id="GO:0005737">
    <property type="term" value="C:cytoplasm"/>
    <property type="evidence" value="ECO:0000314"/>
    <property type="project" value="UniProtKB"/>
</dbReference>
<dbReference type="GO" id="GO:0005829">
    <property type="term" value="C:cytosol"/>
    <property type="evidence" value="ECO:0000304"/>
    <property type="project" value="Reactome"/>
</dbReference>
<dbReference type="GO" id="GO:0070062">
    <property type="term" value="C:extracellular exosome"/>
    <property type="evidence" value="ECO:0007005"/>
    <property type="project" value="UniProtKB"/>
</dbReference>
<dbReference type="GO" id="GO:0005925">
    <property type="term" value="C:focal adhesion"/>
    <property type="evidence" value="ECO:0007005"/>
    <property type="project" value="UniProtKB"/>
</dbReference>
<dbReference type="GO" id="GO:0030027">
    <property type="term" value="C:lamellipodium"/>
    <property type="evidence" value="ECO:0000314"/>
    <property type="project" value="UniProtKB"/>
</dbReference>
<dbReference type="GO" id="GO:0016020">
    <property type="term" value="C:membrane"/>
    <property type="evidence" value="ECO:0007005"/>
    <property type="project" value="UniProtKB"/>
</dbReference>
<dbReference type="GO" id="GO:0005634">
    <property type="term" value="C:nucleus"/>
    <property type="evidence" value="ECO:0000314"/>
    <property type="project" value="UniProtKB"/>
</dbReference>
<dbReference type="GO" id="GO:0035861">
    <property type="term" value="C:site of double-strand break"/>
    <property type="evidence" value="ECO:0000250"/>
    <property type="project" value="UniProtKB"/>
</dbReference>
<dbReference type="GO" id="GO:0003779">
    <property type="term" value="F:actin binding"/>
    <property type="evidence" value="ECO:0007669"/>
    <property type="project" value="UniProtKB-KW"/>
</dbReference>
<dbReference type="GO" id="GO:0005524">
    <property type="term" value="F:ATP binding"/>
    <property type="evidence" value="ECO:0007669"/>
    <property type="project" value="UniProtKB-KW"/>
</dbReference>
<dbReference type="GO" id="GO:0005200">
    <property type="term" value="F:structural constituent of cytoskeleton"/>
    <property type="evidence" value="ECO:0000314"/>
    <property type="project" value="FlyBase"/>
</dbReference>
<dbReference type="GO" id="GO:0070358">
    <property type="term" value="P:actin polymerization-dependent cell motility"/>
    <property type="evidence" value="ECO:0000304"/>
    <property type="project" value="UniProtKB"/>
</dbReference>
<dbReference type="GO" id="GO:0034314">
    <property type="term" value="P:Arp2/3 complex-mediated actin nucleation"/>
    <property type="evidence" value="ECO:0000314"/>
    <property type="project" value="UniProtKB"/>
</dbReference>
<dbReference type="GO" id="GO:0008356">
    <property type="term" value="P:asymmetric cell division"/>
    <property type="evidence" value="ECO:0007669"/>
    <property type="project" value="Ensembl"/>
</dbReference>
<dbReference type="GO" id="GO:0071346">
    <property type="term" value="P:cellular response to type II interferon"/>
    <property type="evidence" value="ECO:0007669"/>
    <property type="project" value="Ensembl"/>
</dbReference>
<dbReference type="GO" id="GO:0060271">
    <property type="term" value="P:cilium assembly"/>
    <property type="evidence" value="ECO:0000315"/>
    <property type="project" value="UniProtKB"/>
</dbReference>
<dbReference type="GO" id="GO:0007163">
    <property type="term" value="P:establishment or maintenance of cell polarity"/>
    <property type="evidence" value="ECO:0007669"/>
    <property type="project" value="Ensembl"/>
</dbReference>
<dbReference type="GO" id="GO:0016344">
    <property type="term" value="P:meiotic chromosome movement towards spindle pole"/>
    <property type="evidence" value="ECO:0007669"/>
    <property type="project" value="Ensembl"/>
</dbReference>
<dbReference type="GO" id="GO:0033206">
    <property type="term" value="P:meiotic cytokinesis"/>
    <property type="evidence" value="ECO:0007669"/>
    <property type="project" value="Ensembl"/>
</dbReference>
<dbReference type="GO" id="GO:0010592">
    <property type="term" value="P:positive regulation of lamellipodium assembly"/>
    <property type="evidence" value="ECO:0000314"/>
    <property type="project" value="UniProtKB"/>
</dbReference>
<dbReference type="GO" id="GO:0045944">
    <property type="term" value="P:positive regulation of transcription by RNA polymerase II"/>
    <property type="evidence" value="ECO:0000314"/>
    <property type="project" value="UniProtKB"/>
</dbReference>
<dbReference type="GO" id="GO:0051653">
    <property type="term" value="P:spindle localization"/>
    <property type="evidence" value="ECO:0007669"/>
    <property type="project" value="Ensembl"/>
</dbReference>
<dbReference type="CDD" id="cd10221">
    <property type="entry name" value="ASKHA_NBD_Arp3-like"/>
    <property type="match status" value="1"/>
</dbReference>
<dbReference type="FunFam" id="3.30.420.40:FF:000029">
    <property type="entry name" value="Actin-related protein 3"/>
    <property type="match status" value="1"/>
</dbReference>
<dbReference type="FunFam" id="3.30.420.40:FF:000315">
    <property type="entry name" value="Actin-related protein 3"/>
    <property type="match status" value="1"/>
</dbReference>
<dbReference type="FunFam" id="3.30.420.40:FF:000803">
    <property type="entry name" value="Actin-related protein 3"/>
    <property type="match status" value="1"/>
</dbReference>
<dbReference type="FunFam" id="3.90.640.10:FF:000006">
    <property type="entry name" value="Actin-related protein 3 (ARP3)"/>
    <property type="match status" value="1"/>
</dbReference>
<dbReference type="FunFam" id="2.30.36.70:FF:000002">
    <property type="entry name" value="actin-related protein 3 isoform X1"/>
    <property type="match status" value="1"/>
</dbReference>
<dbReference type="Gene3D" id="3.30.420.40">
    <property type="match status" value="2"/>
</dbReference>
<dbReference type="Gene3D" id="2.30.36.70">
    <property type="entry name" value="Actin, Chain A, domain 2"/>
    <property type="match status" value="1"/>
</dbReference>
<dbReference type="Gene3D" id="3.90.640.10">
    <property type="entry name" value="Actin, Chain A, domain 4"/>
    <property type="match status" value="1"/>
</dbReference>
<dbReference type="InterPro" id="IPR004000">
    <property type="entry name" value="Actin"/>
</dbReference>
<dbReference type="InterPro" id="IPR020902">
    <property type="entry name" value="Actin/actin-like_CS"/>
</dbReference>
<dbReference type="InterPro" id="IPR043129">
    <property type="entry name" value="ATPase_NBD"/>
</dbReference>
<dbReference type="PANTHER" id="PTHR11937">
    <property type="entry name" value="ACTIN"/>
    <property type="match status" value="1"/>
</dbReference>
<dbReference type="Pfam" id="PF00022">
    <property type="entry name" value="Actin"/>
    <property type="match status" value="2"/>
</dbReference>
<dbReference type="SMART" id="SM00268">
    <property type="entry name" value="ACTIN"/>
    <property type="match status" value="1"/>
</dbReference>
<dbReference type="SUPFAM" id="SSF53067">
    <property type="entry name" value="Actin-like ATPase domain"/>
    <property type="match status" value="2"/>
</dbReference>
<dbReference type="PROSITE" id="PS01132">
    <property type="entry name" value="ACTINS_ACT_LIKE"/>
    <property type="match status" value="1"/>
</dbReference>
<proteinExistence type="evidence at protein level"/>
<evidence type="ECO:0000269" key="1">
    <source>
    </source>
</evidence>
<evidence type="ECO:0000269" key="2">
    <source>
    </source>
</evidence>
<evidence type="ECO:0000269" key="3">
    <source>
    </source>
</evidence>
<evidence type="ECO:0000269" key="4">
    <source>
    </source>
</evidence>
<evidence type="ECO:0000269" key="5">
    <source>
    </source>
</evidence>
<evidence type="ECO:0000269" key="6">
    <source>
    </source>
</evidence>
<evidence type="ECO:0000269" key="7">
    <source>
    </source>
</evidence>
<evidence type="ECO:0000269" key="8">
    <source>
    </source>
</evidence>
<evidence type="ECO:0000269" key="9">
    <source>
    </source>
</evidence>
<evidence type="ECO:0000269" key="10">
    <source>
    </source>
</evidence>
<evidence type="ECO:0000269" key="11">
    <source ref="8"/>
</evidence>
<evidence type="ECO:0000305" key="12"/>
<evidence type="ECO:0007744" key="13">
    <source>
    </source>
</evidence>
<evidence type="ECO:0007744" key="14">
    <source>
    </source>
</evidence>
<gene>
    <name type="primary">ACTR3</name>
    <name type="synonym">ARP3</name>
</gene>
<sequence>MAGRLPACVVDCGTGYTKLGYAGNTEPQFIIPSCIAIKESAKVGDQAQRRVMKGVDDLDFFIGDEAIEKPTYATKWPIRHGIVEDWDLMERFMEQVIFKYLRAEPEDHYFLLTEPPLNTPENREYTAEIMFESFNVPGLYIAVQAVLALAASWTSRQVGERTLTGTVIDSGDGVTHVIPVAEGYVIGSCIKHIPIAGRDITYFIQQLLRDREVGIPPEQSLETAKAVKERYSYVCPDLVKEFNKYDTDGSKWIKQYTGINAISKKEFSIDVGYERFLGPEIFFHPEFANPDFTQPISEVVDEVIQNCPIDVRRPLYKNIVLSGGSTMFRDFGRRLQRDLKRTVDARLKLSEELSGGRLKPKPIDVQVITHHMQRYAVWFGGSMLASTPEFYQVCHTKKDYEEIGPSICRHNPVFGVMS</sequence>
<keyword id="KW-0002">3D-structure</keyword>
<keyword id="KW-0007">Acetylation</keyword>
<keyword id="KW-0009">Actin-binding</keyword>
<keyword id="KW-0067">ATP-binding</keyword>
<keyword id="KW-0966">Cell projection</keyword>
<keyword id="KW-0970">Cilium biogenesis/degradation</keyword>
<keyword id="KW-0963">Cytoplasm</keyword>
<keyword id="KW-0206">Cytoskeleton</keyword>
<keyword id="KW-0903">Direct protein sequencing</keyword>
<keyword id="KW-0547">Nucleotide-binding</keyword>
<keyword id="KW-0539">Nucleus</keyword>
<keyword id="KW-1267">Proteomics identification</keyword>
<keyword id="KW-1185">Reference proteome</keyword>
<protein>
    <recommendedName>
        <fullName>Actin-related protein 3</fullName>
    </recommendedName>
    <alternativeName>
        <fullName>Actin-like protein 3</fullName>
    </alternativeName>
</protein>
<organism>
    <name type="scientific">Homo sapiens</name>
    <name type="common">Human</name>
    <dbReference type="NCBI Taxonomy" id="9606"/>
    <lineage>
        <taxon>Eukaryota</taxon>
        <taxon>Metazoa</taxon>
        <taxon>Chordata</taxon>
        <taxon>Craniata</taxon>
        <taxon>Vertebrata</taxon>
        <taxon>Euteleostomi</taxon>
        <taxon>Mammalia</taxon>
        <taxon>Eutheria</taxon>
        <taxon>Euarchontoglires</taxon>
        <taxon>Primates</taxon>
        <taxon>Haplorrhini</taxon>
        <taxon>Catarrhini</taxon>
        <taxon>Hominidae</taxon>
        <taxon>Homo</taxon>
    </lineage>
</organism>
<name>ARP3_HUMAN</name>
<comment type="function">
    <text evidence="3 6 7 8 9">ATP-binding component of the Arp2/3 complex, a multiprotein complex that mediates actin polymerization upon stimulation by nucleation-promoting factor (NPF) (PubMed:9000076). The Arp2/3 complex mediates the formation of branched actin networks in the cytoplasm, providing the force for cell motility (PubMed:9000076). Seems to contact the pointed end of the daughter actin filament (PubMed:9000076). In podocytes, required for the formation of lamellipodia downstream of AVIL and PLCE1 regulation (PubMed:29058690). In addition to its role in the cytoplasmic cytoskeleton, the Arp2/3 complex also promotes actin polymerization in the nucleus, thereby regulating gene transcription and repair of damaged DNA (PubMed:17220302, PubMed:29925947). The Arp2/3 complex promotes homologous recombination (HR) repair in response to DNA damage by promoting nuclear actin polymerization, leading to drive motility of double-strand breaks (DSBs) (PubMed:29925947). Plays a role in ciliogenesis (PubMed:20393563).</text>
</comment>
<comment type="subunit">
    <text evidence="1 4 5 7 9 10">Component of the Arp2/3 complex composed of ACTR2/ARP2, ACTR3/ARP3, ARPC1B/p41-ARC, ARPC2/p34-ARC, ARPC3/p21-ARC, ARPC4/p20-ARC and ARPC5/p16-ARC (PubMed:11741539, PubMed:9000076, PubMed:9230079). Interacts with WHDC1 (PubMed:18614018). Interacts weakly with MEFV (PubMed:19109554). Interacts with AVIL (PubMed:29058690).</text>
</comment>
<comment type="interaction">
    <interactant intactId="EBI-351428">
        <id>P61158</id>
    </interactant>
    <interactant intactId="EBI-25922794">
        <id>Q96BI3-2</id>
        <label>APH1A</label>
    </interactant>
    <organismsDiffer>false</organismsDiffer>
    <experiments>3</experiments>
</comment>
<comment type="interaction">
    <interactant intactId="EBI-351428">
        <id>P61158</id>
    </interactant>
    <interactant intactId="EBI-77613">
        <id>P05067</id>
        <label>APP</label>
    </interactant>
    <organismsDiffer>false</organismsDiffer>
    <experiments>3</experiments>
</comment>
<comment type="interaction">
    <interactant intactId="EBI-351428">
        <id>P61158</id>
    </interactant>
    <interactant intactId="EBI-23662416">
        <id>Q9ULD4-2</id>
        <label>BRPF3</label>
    </interactant>
    <organismsDiffer>false</organismsDiffer>
    <experiments>3</experiments>
</comment>
<comment type="interaction">
    <interactant intactId="EBI-351428">
        <id>P61158</id>
    </interactant>
    <interactant intactId="EBI-1041567">
        <id>Q00535</id>
        <label>CDK5</label>
    </interactant>
    <organismsDiffer>false</organismsDiffer>
    <experiments>3</experiments>
</comment>
<comment type="interaction">
    <interactant intactId="EBI-351428">
        <id>P61158</id>
    </interactant>
    <interactant intactId="EBI-1003700">
        <id>Q9H3R5</id>
        <label>CENPH</label>
    </interactant>
    <organismsDiffer>false</organismsDiffer>
    <experiments>3</experiments>
</comment>
<comment type="interaction">
    <interactant intactId="EBI-351428">
        <id>P61158</id>
    </interactant>
    <interactant intactId="EBI-352528">
        <id>P10809</id>
        <label>HSPD1</label>
    </interactant>
    <organismsDiffer>false</organismsDiffer>
    <experiments>3</experiments>
</comment>
<comment type="interaction">
    <interactant intactId="EBI-351428">
        <id>P61158</id>
    </interactant>
    <interactant intactId="EBI-2682803">
        <id>P17535</id>
        <label>JUND</label>
    </interactant>
    <organismsDiffer>false</organismsDiffer>
    <experiments>2</experiments>
</comment>
<comment type="interaction">
    <interactant intactId="EBI-351428">
        <id>P61158</id>
    </interactant>
    <interactant intactId="EBI-357085">
        <id>Q9UNE7</id>
        <label>STUB1</label>
    </interactant>
    <organismsDiffer>false</organismsDiffer>
    <experiments>3</experiments>
</comment>
<comment type="interaction">
    <interactant intactId="EBI-351428">
        <id>P61158</id>
    </interactant>
    <interactant intactId="EBI-25834258">
        <id>P13051-2</id>
        <label>UNG</label>
    </interactant>
    <organismsDiffer>false</organismsDiffer>
    <experiments>3</experiments>
</comment>
<comment type="subcellular location">
    <subcellularLocation>
        <location evidence="5">Cytoplasm</location>
        <location evidence="5">Cytoskeleton</location>
    </subcellularLocation>
    <subcellularLocation>
        <location evidence="10">Cell projection</location>
    </subcellularLocation>
    <subcellularLocation>
        <location evidence="2 3 8">Nucleus</location>
    </subcellularLocation>
    <text>In pre-apoptotic cells, colocalizes with MEFV in large specks (pyroptosomes) (PubMed:19109554).</text>
</comment>
<comment type="similarity">
    <text evidence="12">Belongs to the actin family. ARP3 subfamily.</text>
</comment>
<comment type="online information" name="Protein Spotlight">
    <link uri="https://www.proteinspotlight.org/back_issues/208/"/>
    <text>On mar and motion - Issue 208 of November 2018</text>
</comment>
<reference key="1">
    <citation type="journal article" date="1997" name="J. Cell Biol.">
        <title>The human Arp2/3 complex is composed of evolutionarily conserved subunits and is localized to cellular regions of dynamic actin filament assembly.</title>
        <authorList>
            <person name="Welch M.D."/>
            <person name="Depace A.H."/>
            <person name="Verma S."/>
            <person name="Iwamatsu A."/>
            <person name="Mitchison T.J."/>
        </authorList>
    </citation>
    <scope>NUCLEOTIDE SEQUENCE [MRNA]</scope>
    <scope>IDENTIFICATION IN THE ARP2/2 COMPLEX</scope>
    <scope>SUBCELLULAR LOCATION</scope>
</reference>
<reference key="2">
    <citation type="submission" date="1999-02" db="EMBL/GenBank/DDBJ databases">
        <title>Identification of human estrogen-inducible transcripts from a serum resistant variant of breast cancer MCF7 cells.</title>
        <authorList>
            <person name="Szelei J."/>
            <person name="Soto A.M."/>
            <person name="Geck P."/>
            <person name="Desronvil M."/>
            <person name="Prechtl N."/>
            <person name="Weill B."/>
            <person name="Sonnenschein C."/>
        </authorList>
    </citation>
    <scope>NUCLEOTIDE SEQUENCE [MRNA]</scope>
</reference>
<reference key="3">
    <citation type="journal article" date="2004" name="Nat. Genet.">
        <title>Complete sequencing and characterization of 21,243 full-length human cDNAs.</title>
        <authorList>
            <person name="Ota T."/>
            <person name="Suzuki Y."/>
            <person name="Nishikawa T."/>
            <person name="Otsuki T."/>
            <person name="Sugiyama T."/>
            <person name="Irie R."/>
            <person name="Wakamatsu A."/>
            <person name="Hayashi K."/>
            <person name="Sato H."/>
            <person name="Nagai K."/>
            <person name="Kimura K."/>
            <person name="Makita H."/>
            <person name="Sekine M."/>
            <person name="Obayashi M."/>
            <person name="Nishi T."/>
            <person name="Shibahara T."/>
            <person name="Tanaka T."/>
            <person name="Ishii S."/>
            <person name="Yamamoto J."/>
            <person name="Saito K."/>
            <person name="Kawai Y."/>
            <person name="Isono Y."/>
            <person name="Nakamura Y."/>
            <person name="Nagahari K."/>
            <person name="Murakami K."/>
            <person name="Yasuda T."/>
            <person name="Iwayanagi T."/>
            <person name="Wagatsuma M."/>
            <person name="Shiratori A."/>
            <person name="Sudo H."/>
            <person name="Hosoiri T."/>
            <person name="Kaku Y."/>
            <person name="Kodaira H."/>
            <person name="Kondo H."/>
            <person name="Sugawara M."/>
            <person name="Takahashi M."/>
            <person name="Kanda K."/>
            <person name="Yokoi T."/>
            <person name="Furuya T."/>
            <person name="Kikkawa E."/>
            <person name="Omura Y."/>
            <person name="Abe K."/>
            <person name="Kamihara K."/>
            <person name="Katsuta N."/>
            <person name="Sato K."/>
            <person name="Tanikawa M."/>
            <person name="Yamazaki M."/>
            <person name="Ninomiya K."/>
            <person name="Ishibashi T."/>
            <person name="Yamashita H."/>
            <person name="Murakawa K."/>
            <person name="Fujimori K."/>
            <person name="Tanai H."/>
            <person name="Kimata M."/>
            <person name="Watanabe M."/>
            <person name="Hiraoka S."/>
            <person name="Chiba Y."/>
            <person name="Ishida S."/>
            <person name="Ono Y."/>
            <person name="Takiguchi S."/>
            <person name="Watanabe S."/>
            <person name="Yosida M."/>
            <person name="Hotuta T."/>
            <person name="Kusano J."/>
            <person name="Kanehori K."/>
            <person name="Takahashi-Fujii A."/>
            <person name="Hara H."/>
            <person name="Tanase T.-O."/>
            <person name="Nomura Y."/>
            <person name="Togiya S."/>
            <person name="Komai F."/>
            <person name="Hara R."/>
            <person name="Takeuchi K."/>
            <person name="Arita M."/>
            <person name="Imose N."/>
            <person name="Musashino K."/>
            <person name="Yuuki H."/>
            <person name="Oshima A."/>
            <person name="Sasaki N."/>
            <person name="Aotsuka S."/>
            <person name="Yoshikawa Y."/>
            <person name="Matsunawa H."/>
            <person name="Ichihara T."/>
            <person name="Shiohata N."/>
            <person name="Sano S."/>
            <person name="Moriya S."/>
            <person name="Momiyama H."/>
            <person name="Satoh N."/>
            <person name="Takami S."/>
            <person name="Terashima Y."/>
            <person name="Suzuki O."/>
            <person name="Nakagawa S."/>
            <person name="Senoh A."/>
            <person name="Mizoguchi H."/>
            <person name="Goto Y."/>
            <person name="Shimizu F."/>
            <person name="Wakebe H."/>
            <person name="Hishigaki H."/>
            <person name="Watanabe T."/>
            <person name="Sugiyama A."/>
            <person name="Takemoto M."/>
            <person name="Kawakami B."/>
            <person name="Yamazaki M."/>
            <person name="Watanabe K."/>
            <person name="Kumagai A."/>
            <person name="Itakura S."/>
            <person name="Fukuzumi Y."/>
            <person name="Fujimori Y."/>
            <person name="Komiyama M."/>
            <person name="Tashiro H."/>
            <person name="Tanigami A."/>
            <person name="Fujiwara T."/>
            <person name="Ono T."/>
            <person name="Yamada K."/>
            <person name="Fujii Y."/>
            <person name="Ozaki K."/>
            <person name="Hirao M."/>
            <person name="Ohmori Y."/>
            <person name="Kawabata A."/>
            <person name="Hikiji T."/>
            <person name="Kobatake N."/>
            <person name="Inagaki H."/>
            <person name="Ikema Y."/>
            <person name="Okamoto S."/>
            <person name="Okitani R."/>
            <person name="Kawakami T."/>
            <person name="Noguchi S."/>
            <person name="Itoh T."/>
            <person name="Shigeta K."/>
            <person name="Senba T."/>
            <person name="Matsumura K."/>
            <person name="Nakajima Y."/>
            <person name="Mizuno T."/>
            <person name="Morinaga M."/>
            <person name="Sasaki M."/>
            <person name="Togashi T."/>
            <person name="Oyama M."/>
            <person name="Hata H."/>
            <person name="Watanabe M."/>
            <person name="Komatsu T."/>
            <person name="Mizushima-Sugano J."/>
            <person name="Satoh T."/>
            <person name="Shirai Y."/>
            <person name="Takahashi Y."/>
            <person name="Nakagawa K."/>
            <person name="Okumura K."/>
            <person name="Nagase T."/>
            <person name="Nomura N."/>
            <person name="Kikuchi H."/>
            <person name="Masuho Y."/>
            <person name="Yamashita R."/>
            <person name="Nakai K."/>
            <person name="Yada T."/>
            <person name="Nakamura Y."/>
            <person name="Ohara O."/>
            <person name="Isogai T."/>
            <person name="Sugano S."/>
        </authorList>
    </citation>
    <scope>NUCLEOTIDE SEQUENCE [LARGE SCALE MRNA]</scope>
</reference>
<reference key="4">
    <citation type="journal article" date="2005" name="Nature">
        <title>Generation and annotation of the DNA sequences of human chromosomes 2 and 4.</title>
        <authorList>
            <person name="Hillier L.W."/>
            <person name="Graves T.A."/>
            <person name="Fulton R.S."/>
            <person name="Fulton L.A."/>
            <person name="Pepin K.H."/>
            <person name="Minx P."/>
            <person name="Wagner-McPherson C."/>
            <person name="Layman D."/>
            <person name="Wylie K."/>
            <person name="Sekhon M."/>
            <person name="Becker M.C."/>
            <person name="Fewell G.A."/>
            <person name="Delehaunty K.D."/>
            <person name="Miner T.L."/>
            <person name="Nash W.E."/>
            <person name="Kremitzki C."/>
            <person name="Oddy L."/>
            <person name="Du H."/>
            <person name="Sun H."/>
            <person name="Bradshaw-Cordum H."/>
            <person name="Ali J."/>
            <person name="Carter J."/>
            <person name="Cordes M."/>
            <person name="Harris A."/>
            <person name="Isak A."/>
            <person name="van Brunt A."/>
            <person name="Nguyen C."/>
            <person name="Du F."/>
            <person name="Courtney L."/>
            <person name="Kalicki J."/>
            <person name="Ozersky P."/>
            <person name="Abbott S."/>
            <person name="Armstrong J."/>
            <person name="Belter E.A."/>
            <person name="Caruso L."/>
            <person name="Cedroni M."/>
            <person name="Cotton M."/>
            <person name="Davidson T."/>
            <person name="Desai A."/>
            <person name="Elliott G."/>
            <person name="Erb T."/>
            <person name="Fronick C."/>
            <person name="Gaige T."/>
            <person name="Haakenson W."/>
            <person name="Haglund K."/>
            <person name="Holmes A."/>
            <person name="Harkins R."/>
            <person name="Kim K."/>
            <person name="Kruchowski S.S."/>
            <person name="Strong C.M."/>
            <person name="Grewal N."/>
            <person name="Goyea E."/>
            <person name="Hou S."/>
            <person name="Levy A."/>
            <person name="Martinka S."/>
            <person name="Mead K."/>
            <person name="McLellan M.D."/>
            <person name="Meyer R."/>
            <person name="Randall-Maher J."/>
            <person name="Tomlinson C."/>
            <person name="Dauphin-Kohlberg S."/>
            <person name="Kozlowicz-Reilly A."/>
            <person name="Shah N."/>
            <person name="Swearengen-Shahid S."/>
            <person name="Snider J."/>
            <person name="Strong J.T."/>
            <person name="Thompson J."/>
            <person name="Yoakum M."/>
            <person name="Leonard S."/>
            <person name="Pearman C."/>
            <person name="Trani L."/>
            <person name="Radionenko M."/>
            <person name="Waligorski J.E."/>
            <person name="Wang C."/>
            <person name="Rock S.M."/>
            <person name="Tin-Wollam A.-M."/>
            <person name="Maupin R."/>
            <person name="Latreille P."/>
            <person name="Wendl M.C."/>
            <person name="Yang S.-P."/>
            <person name="Pohl C."/>
            <person name="Wallis J.W."/>
            <person name="Spieth J."/>
            <person name="Bieri T.A."/>
            <person name="Berkowicz N."/>
            <person name="Nelson J.O."/>
            <person name="Osborne J."/>
            <person name="Ding L."/>
            <person name="Meyer R."/>
            <person name="Sabo A."/>
            <person name="Shotland Y."/>
            <person name="Sinha P."/>
            <person name="Wohldmann P.E."/>
            <person name="Cook L.L."/>
            <person name="Hickenbotham M.T."/>
            <person name="Eldred J."/>
            <person name="Williams D."/>
            <person name="Jones T.A."/>
            <person name="She X."/>
            <person name="Ciccarelli F.D."/>
            <person name="Izaurralde E."/>
            <person name="Taylor J."/>
            <person name="Schmutz J."/>
            <person name="Myers R.M."/>
            <person name="Cox D.R."/>
            <person name="Huang X."/>
            <person name="McPherson J.D."/>
            <person name="Mardis E.R."/>
            <person name="Clifton S.W."/>
            <person name="Warren W.C."/>
            <person name="Chinwalla A.T."/>
            <person name="Eddy S.R."/>
            <person name="Marra M.A."/>
            <person name="Ovcharenko I."/>
            <person name="Furey T.S."/>
            <person name="Miller W."/>
            <person name="Eichler E.E."/>
            <person name="Bork P."/>
            <person name="Suyama M."/>
            <person name="Torrents D."/>
            <person name="Waterston R.H."/>
            <person name="Wilson R.K."/>
        </authorList>
    </citation>
    <scope>NUCLEOTIDE SEQUENCE [LARGE SCALE GENOMIC DNA]</scope>
</reference>
<reference key="5">
    <citation type="submission" date="2005-07" db="EMBL/GenBank/DDBJ databases">
        <authorList>
            <person name="Mural R.J."/>
            <person name="Istrail S."/>
            <person name="Sutton G."/>
            <person name="Florea L."/>
            <person name="Halpern A.L."/>
            <person name="Mobarry C.M."/>
            <person name="Lippert R."/>
            <person name="Walenz B."/>
            <person name="Shatkay H."/>
            <person name="Dew I."/>
            <person name="Miller J.R."/>
            <person name="Flanigan M.J."/>
            <person name="Edwards N.J."/>
            <person name="Bolanos R."/>
            <person name="Fasulo D."/>
            <person name="Halldorsson B.V."/>
            <person name="Hannenhalli S."/>
            <person name="Turner R."/>
            <person name="Yooseph S."/>
            <person name="Lu F."/>
            <person name="Nusskern D.R."/>
            <person name="Shue B.C."/>
            <person name="Zheng X.H."/>
            <person name="Zhong F."/>
            <person name="Delcher A.L."/>
            <person name="Huson D.H."/>
            <person name="Kravitz S.A."/>
            <person name="Mouchard L."/>
            <person name="Reinert K."/>
            <person name="Remington K.A."/>
            <person name="Clark A.G."/>
            <person name="Waterman M.S."/>
            <person name="Eichler E.E."/>
            <person name="Adams M.D."/>
            <person name="Hunkapiller M.W."/>
            <person name="Myers E.W."/>
            <person name="Venter J.C."/>
        </authorList>
    </citation>
    <scope>NUCLEOTIDE SEQUENCE [LARGE SCALE GENOMIC DNA]</scope>
</reference>
<reference key="6">
    <citation type="journal article" date="2004" name="Genome Res.">
        <title>The status, quality, and expansion of the NIH full-length cDNA project: the Mammalian Gene Collection (MGC).</title>
        <authorList>
            <consortium name="The MGC Project Team"/>
        </authorList>
    </citation>
    <scope>NUCLEOTIDE SEQUENCE [LARGE SCALE MRNA]</scope>
    <source>
        <tissue>Brain</tissue>
    </source>
</reference>
<reference key="7">
    <citation type="journal article" date="1997" name="Nature">
        <title>Actin polymerization is induced by Arp2/3 protein complex at the surface of Listeria monocytogenes.</title>
        <authorList>
            <person name="Welch M.D."/>
            <person name="Iwamatsu A."/>
            <person name="Mitchison T.J."/>
        </authorList>
    </citation>
    <scope>PROTEIN SEQUENCE</scope>
    <scope>FUNCTION OF THE ARP2/3 COMPLEX</scope>
    <scope>IDENTIFICATION IN THE ARP2/3 COMPLEX</scope>
    <scope>SUBCELLULAR LOCATION</scope>
</reference>
<reference key="8">
    <citation type="submission" date="2006-05" db="UniProtKB">
        <authorList>
            <person name="Bienvenut W.V."/>
            <person name="Kanor S."/>
            <person name="Tissot J.-D."/>
            <person name="Quadroni M."/>
        </authorList>
    </citation>
    <scope>PROTEIN SEQUENCE OF 2-17</scope>
    <scope>CLEAVAGE OF INITIATOR METHIONINE</scope>
    <scope>ACETYLATION AT ALA-2</scope>
    <scope>IDENTIFICATION BY MASS SPECTROMETRY</scope>
    <source>
        <tissue>T-cell</tissue>
    </source>
</reference>
<reference key="9">
    <citation type="submission" date="2007-03" db="UniProtKB">
        <authorList>
            <person name="Lubec G."/>
            <person name="Afjehi-Sadat L."/>
        </authorList>
    </citation>
    <scope>PROTEIN SEQUENCE OF 103-123 AND 199-209</scope>
    <scope>IDENTIFICATION BY MASS SPECTROMETRY</scope>
    <source>
        <tissue>Brain</tissue>
        <tissue>Cajal-Retzius cell</tissue>
    </source>
</reference>
<reference key="10">
    <citation type="journal article" date="2001" name="Mol. Cell">
        <title>Reconstitution of human Arp2/3 complex reveals critical roles of individual subunits in complex structure and activity.</title>
        <authorList>
            <person name="Gournier H."/>
            <person name="Goley E.D."/>
            <person name="Niederstrasser H."/>
            <person name="Trinh T."/>
            <person name="Welch M.D."/>
        </authorList>
    </citation>
    <scope>RECONSTITUTION OF THE ARP2/3 COMPLEX</scope>
</reference>
<reference key="11">
    <citation type="journal article" date="2005" name="Nat. Biotechnol.">
        <title>Immunoaffinity profiling of tyrosine phosphorylation in cancer cells.</title>
        <authorList>
            <person name="Rush J."/>
            <person name="Moritz A."/>
            <person name="Lee K.A."/>
            <person name="Guo A."/>
            <person name="Goss V.L."/>
            <person name="Spek E.J."/>
            <person name="Zhang H."/>
            <person name="Zha X.-M."/>
            <person name="Polakiewicz R.D."/>
            <person name="Comb M.J."/>
        </authorList>
    </citation>
    <scope>IDENTIFICATION BY MASS SPECTROMETRY [LARGE SCALE ANALYSIS]</scope>
</reference>
<reference key="12">
    <citation type="journal article" date="2007" name="J. Biol. Chem.">
        <title>A novel role of the actin-nucleating Arp2/3 complex in the regulation of RNA polymerase II-dependent transcription.</title>
        <authorList>
            <person name="Yoo Y."/>
            <person name="Wu X."/>
            <person name="Guan J.L."/>
        </authorList>
    </citation>
    <scope>FUNCTION</scope>
    <scope>SUBCELLULAR LOCATION</scope>
</reference>
<reference key="13">
    <citation type="journal article" date="2008" name="Cell">
        <title>WHAMM is an Arp2/3 complex activator that binds microtubules and functions in ER to Golgi transport.</title>
        <authorList>
            <person name="Campellone K.G."/>
            <person name="Webb N.J."/>
            <person name="Znameroski E.A."/>
            <person name="Welch M.D."/>
        </authorList>
    </citation>
    <scope>INTERACTION WITH WHDC1</scope>
</reference>
<reference key="14">
    <citation type="journal article" date="2009" name="Anal. Chem.">
        <title>Lys-N and trypsin cover complementary parts of the phosphoproteome in a refined SCX-based approach.</title>
        <authorList>
            <person name="Gauci S."/>
            <person name="Helbig A.O."/>
            <person name="Slijper M."/>
            <person name="Krijgsveld J."/>
            <person name="Heck A.J."/>
            <person name="Mohammed S."/>
        </authorList>
    </citation>
    <scope>ACETYLATION [LARGE SCALE ANALYSIS] AT ALA-2</scope>
    <scope>CLEAVAGE OF INITIATOR METHIONINE [LARGE SCALE ANALYSIS]</scope>
    <scope>IDENTIFICATION BY MASS SPECTROMETRY [LARGE SCALE ANALYSIS]</scope>
</reference>
<reference key="15">
    <citation type="journal article" date="2006" name="Nat. Cell Biol.">
        <title>Regulation of RNA-polymerase-II-dependent transcription by N-WASP and its nuclear-binding partners.</title>
        <authorList>
            <person name="Wu X."/>
            <person name="Yoo Y."/>
            <person name="Okuhama N.N."/>
            <person name="Tucker P.W."/>
            <person name="Liu G."/>
            <person name="Guan J.L."/>
        </authorList>
    </citation>
    <scope>SUBCELLULAR LOCATION</scope>
</reference>
<reference key="16">
    <citation type="journal article" date="2009" name="Exp. Biol. Med. (Maywood)">
        <title>Pyrin and ASC co-localize to cellular sites that are rich in polymerizing actin.</title>
        <authorList>
            <person name="Waite A.L."/>
            <person name="Schaner P."/>
            <person name="Hu C."/>
            <person name="Richards N."/>
            <person name="Balci-Peynircioglu B."/>
            <person name="Hong A."/>
            <person name="Fox M."/>
            <person name="Gumucio D.L."/>
        </authorList>
    </citation>
    <scope>SUBCELLULAR LOCATION</scope>
    <scope>INTERACTION WITH MEFV</scope>
</reference>
<reference key="17">
    <citation type="journal article" date="2009" name="Science">
        <title>Lysine acetylation targets protein complexes and co-regulates major cellular functions.</title>
        <authorList>
            <person name="Choudhary C."/>
            <person name="Kumar C."/>
            <person name="Gnad F."/>
            <person name="Nielsen M.L."/>
            <person name="Rehman M."/>
            <person name="Walther T.C."/>
            <person name="Olsen J.V."/>
            <person name="Mann M."/>
        </authorList>
    </citation>
    <scope>ACETYLATION [LARGE SCALE ANALYSIS] AT LYS-240; LYS-244; LYS-251 AND LYS-254</scope>
    <scope>IDENTIFICATION BY MASS SPECTROMETRY [LARGE SCALE ANALYSIS]</scope>
</reference>
<reference key="18">
    <citation type="journal article" date="2010" name="Nature">
        <title>Functional genomic screen for modulators of ciliogenesis and cilium length.</title>
        <authorList>
            <person name="Kim J."/>
            <person name="Lee J.E."/>
            <person name="Heynen-Genel S."/>
            <person name="Suyama E."/>
            <person name="Ono K."/>
            <person name="Lee K."/>
            <person name="Ideker T."/>
            <person name="Aza-Blanc P."/>
            <person name="Gleeson J.G."/>
        </authorList>
    </citation>
    <scope>FUNCTION</scope>
</reference>
<reference key="19">
    <citation type="journal article" date="2011" name="BMC Syst. Biol.">
        <title>Initial characterization of the human central proteome.</title>
        <authorList>
            <person name="Burkard T.R."/>
            <person name="Planyavsky M."/>
            <person name="Kaupe I."/>
            <person name="Breitwieser F.P."/>
            <person name="Buerckstuemmer T."/>
            <person name="Bennett K.L."/>
            <person name="Superti-Furga G."/>
            <person name="Colinge J."/>
        </authorList>
    </citation>
    <scope>IDENTIFICATION BY MASS SPECTROMETRY [LARGE SCALE ANALYSIS]</scope>
</reference>
<reference key="20">
    <citation type="journal article" date="2014" name="J. Proteomics">
        <title>An enzyme assisted RP-RPLC approach for in-depth analysis of human liver phosphoproteome.</title>
        <authorList>
            <person name="Bian Y."/>
            <person name="Song C."/>
            <person name="Cheng K."/>
            <person name="Dong M."/>
            <person name="Wang F."/>
            <person name="Huang J."/>
            <person name="Sun D."/>
            <person name="Wang L."/>
            <person name="Ye M."/>
            <person name="Zou H."/>
        </authorList>
    </citation>
    <scope>IDENTIFICATION BY MASS SPECTROMETRY [LARGE SCALE ANALYSIS]</scope>
    <source>
        <tissue>Liver</tissue>
    </source>
</reference>
<reference key="21">
    <citation type="journal article" date="2015" name="Proteomics">
        <title>N-terminome analysis of the human mitochondrial proteome.</title>
        <authorList>
            <person name="Vaca Jacome A.S."/>
            <person name="Rabilloud T."/>
            <person name="Schaeffer-Reiss C."/>
            <person name="Rompais M."/>
            <person name="Ayoub D."/>
            <person name="Lane L."/>
            <person name="Bairoch A."/>
            <person name="Van Dorsselaer A."/>
            <person name="Carapito C."/>
        </authorList>
    </citation>
    <scope>IDENTIFICATION BY MASS SPECTROMETRY [LARGE SCALE ANALYSIS]</scope>
</reference>
<reference key="22">
    <citation type="journal article" date="2017" name="J. Clin. Invest.">
        <title>Advillin acts upstream of phospholipase C 1 in steroid-resistant nephrotic syndrome.</title>
        <authorList>
            <person name="Rao J."/>
            <person name="Ashraf S."/>
            <person name="Tan W."/>
            <person name="van der Ven A.T."/>
            <person name="Gee H.Y."/>
            <person name="Braun D.A."/>
            <person name="Feher K."/>
            <person name="George S.P."/>
            <person name="Esmaeilniakooshkghazi A."/>
            <person name="Choi W.I."/>
            <person name="Jobst-Schwan T."/>
            <person name="Schneider R."/>
            <person name="Schmidt J.M."/>
            <person name="Widmeier E."/>
            <person name="Warejko J.K."/>
            <person name="Hermle T."/>
            <person name="Schapiro D."/>
            <person name="Lovric S."/>
            <person name="Shril S."/>
            <person name="Daga A."/>
            <person name="Nayir A."/>
            <person name="Shenoy M."/>
            <person name="Tse Y."/>
            <person name="Bald M."/>
            <person name="Helmchen U."/>
            <person name="Mir S."/>
            <person name="Berdeli A."/>
            <person name="Kari J.A."/>
            <person name="El Desoky S."/>
            <person name="Soliman N.A."/>
            <person name="Bagga A."/>
            <person name="Mane S."/>
            <person name="Jairajpuri M.A."/>
            <person name="Lifton R.P."/>
            <person name="Khurana S."/>
            <person name="Martins J.C."/>
            <person name="Hildebrandt F."/>
        </authorList>
    </citation>
    <scope>FUNCTION</scope>
    <scope>INTERACTION WITH AVIL</scope>
</reference>
<reference key="23">
    <citation type="journal article" date="2018" name="Nature">
        <title>Nuclear ARP2/3 drives DNA break clustering for homology-directed repair.</title>
        <authorList>
            <person name="Schrank B.R."/>
            <person name="Aparicio T."/>
            <person name="Li Y."/>
            <person name="Chang W."/>
            <person name="Chait B.T."/>
            <person name="Gundersen G.G."/>
            <person name="Gottesman M.E."/>
            <person name="Gautier J."/>
        </authorList>
    </citation>
    <scope>FUNCTION</scope>
    <scope>SUBCELLULAR LOCATION</scope>
</reference>
<accession>P61158</accession>
<accession>P32391</accession>
<accession>Q53QM2</accession>
<feature type="initiator methionine" description="Removed" evidence="11 13">
    <location>
        <position position="1"/>
    </location>
</feature>
<feature type="chain" id="PRO_0000089079" description="Actin-related protein 3">
    <location>
        <begin position="2"/>
        <end position="418"/>
    </location>
</feature>
<feature type="modified residue" description="N-acetylalanine" evidence="11 13">
    <location>
        <position position="2"/>
    </location>
</feature>
<feature type="modified residue" description="N6-acetyllysine" evidence="14">
    <location>
        <position position="240"/>
    </location>
</feature>
<feature type="modified residue" description="N6-acetyllysine" evidence="14">
    <location>
        <position position="244"/>
    </location>
</feature>
<feature type="modified residue" description="N6-acetyllysine" evidence="14">
    <location>
        <position position="251"/>
    </location>
</feature>
<feature type="modified residue" description="N6-acetyllysine" evidence="14">
    <location>
        <position position="254"/>
    </location>
</feature>